<accession>P36889</accession>
<organism>
    <name type="scientific">Leishmania donovani</name>
    <dbReference type="NCBI Taxonomy" id="5661"/>
    <lineage>
        <taxon>Eukaryota</taxon>
        <taxon>Discoba</taxon>
        <taxon>Euglenozoa</taxon>
        <taxon>Kinetoplastea</taxon>
        <taxon>Metakinetoplastina</taxon>
        <taxon>Trypanosomatida</taxon>
        <taxon>Trypanosomatidae</taxon>
        <taxon>Leishmaniinae</taxon>
        <taxon>Leishmania</taxon>
    </lineage>
</organism>
<dbReference type="EC" id="3.13.2.1"/>
<dbReference type="EMBL" id="M76556">
    <property type="protein sequence ID" value="AAA29265.1"/>
    <property type="molecule type" value="Genomic_DNA"/>
</dbReference>
<dbReference type="PIR" id="A45569">
    <property type="entry name" value="A45569"/>
</dbReference>
<dbReference type="SMR" id="P36889"/>
<dbReference type="VEuPathDB" id="TriTrypDB:LdBPK_364100.1"/>
<dbReference type="VEuPathDB" id="TriTrypDB:LdCL_360048000"/>
<dbReference type="VEuPathDB" id="TriTrypDB:LDHU3_36.5490"/>
<dbReference type="UniPathway" id="UPA00314">
    <property type="reaction ID" value="UER00076"/>
</dbReference>
<dbReference type="GO" id="GO:0005829">
    <property type="term" value="C:cytosol"/>
    <property type="evidence" value="ECO:0007669"/>
    <property type="project" value="TreeGrafter"/>
</dbReference>
<dbReference type="GO" id="GO:0004013">
    <property type="term" value="F:adenosylhomocysteinase activity"/>
    <property type="evidence" value="ECO:0007669"/>
    <property type="project" value="RHEA"/>
</dbReference>
<dbReference type="GO" id="GO:0006730">
    <property type="term" value="P:one-carbon metabolic process"/>
    <property type="evidence" value="ECO:0007669"/>
    <property type="project" value="UniProtKB-KW"/>
</dbReference>
<dbReference type="GO" id="GO:0033353">
    <property type="term" value="P:S-adenosylmethionine cycle"/>
    <property type="evidence" value="ECO:0007669"/>
    <property type="project" value="TreeGrafter"/>
</dbReference>
<dbReference type="CDD" id="cd00401">
    <property type="entry name" value="SAHH"/>
    <property type="match status" value="1"/>
</dbReference>
<dbReference type="FunFam" id="3.40.50.1480:FF:000012">
    <property type="entry name" value="Adenosylhomocysteinase"/>
    <property type="match status" value="1"/>
</dbReference>
<dbReference type="FunFam" id="3.40.50.720:FF:000004">
    <property type="entry name" value="Adenosylhomocysteinase"/>
    <property type="match status" value="1"/>
</dbReference>
<dbReference type="Gene3D" id="3.40.50.1480">
    <property type="entry name" value="Adenosylhomocysteinase-like"/>
    <property type="match status" value="3"/>
</dbReference>
<dbReference type="Gene3D" id="3.40.50.720">
    <property type="entry name" value="NAD(P)-binding Rossmann-like Domain"/>
    <property type="match status" value="1"/>
</dbReference>
<dbReference type="HAMAP" id="MF_00563">
    <property type="entry name" value="AdoHcyase"/>
    <property type="match status" value="1"/>
</dbReference>
<dbReference type="InterPro" id="IPR042172">
    <property type="entry name" value="Adenosylhomocyst_ase-like_sf"/>
</dbReference>
<dbReference type="InterPro" id="IPR000043">
    <property type="entry name" value="Adenosylhomocysteinase-like"/>
</dbReference>
<dbReference type="InterPro" id="IPR015878">
    <property type="entry name" value="Ado_hCys_hydrolase_NAD-bd"/>
</dbReference>
<dbReference type="InterPro" id="IPR036291">
    <property type="entry name" value="NAD(P)-bd_dom_sf"/>
</dbReference>
<dbReference type="InterPro" id="IPR020082">
    <property type="entry name" value="S-Ado-L-homoCys_hydrolase_CS"/>
</dbReference>
<dbReference type="NCBIfam" id="TIGR00936">
    <property type="entry name" value="ahcY"/>
    <property type="match status" value="1"/>
</dbReference>
<dbReference type="NCBIfam" id="NF004005">
    <property type="entry name" value="PRK05476.2-3"/>
    <property type="match status" value="1"/>
</dbReference>
<dbReference type="PANTHER" id="PTHR23420">
    <property type="entry name" value="ADENOSYLHOMOCYSTEINASE"/>
    <property type="match status" value="1"/>
</dbReference>
<dbReference type="PANTHER" id="PTHR23420:SF0">
    <property type="entry name" value="ADENOSYLHOMOCYSTEINASE"/>
    <property type="match status" value="1"/>
</dbReference>
<dbReference type="Pfam" id="PF05221">
    <property type="entry name" value="AdoHcyase"/>
    <property type="match status" value="2"/>
</dbReference>
<dbReference type="Pfam" id="PF00670">
    <property type="entry name" value="AdoHcyase_NAD"/>
    <property type="match status" value="1"/>
</dbReference>
<dbReference type="PIRSF" id="PIRSF001109">
    <property type="entry name" value="Ad_hcy_hydrolase"/>
    <property type="match status" value="1"/>
</dbReference>
<dbReference type="SMART" id="SM00996">
    <property type="entry name" value="AdoHcyase"/>
    <property type="match status" value="1"/>
</dbReference>
<dbReference type="SMART" id="SM00997">
    <property type="entry name" value="AdoHcyase_NAD"/>
    <property type="match status" value="1"/>
</dbReference>
<dbReference type="SUPFAM" id="SSF52283">
    <property type="entry name" value="Formate/glycerate dehydrogenase catalytic domain-like"/>
    <property type="match status" value="1"/>
</dbReference>
<dbReference type="SUPFAM" id="SSF51735">
    <property type="entry name" value="NAD(P)-binding Rossmann-fold domains"/>
    <property type="match status" value="1"/>
</dbReference>
<dbReference type="PROSITE" id="PS00738">
    <property type="entry name" value="ADOHCYASE_1"/>
    <property type="match status" value="1"/>
</dbReference>
<dbReference type="PROSITE" id="PS00739">
    <property type="entry name" value="ADOHCYASE_2"/>
    <property type="match status" value="1"/>
</dbReference>
<name>SAHH_LEIDO</name>
<sequence length="437" mass="47792">MADYKVKDISLAEWGRKAIELAENEMPGLMELRREYGPSQPLKGAKIAGCLHMTVQTAVLIETLKALGADVRWSSCNIFSTQDNAAAAIAKAGVPVFAWKGETDEEYEWCIAQTVKGFSGDGLPNMILDDGGDLTNLVIDHHPELVPKIFGISEETTTGVKNLYKRLSKGNLPMCAINVNDSVTKSKFDNLYGCRESLVDGMKRATDVMIAGKTCCVCGYGDVGKGCAAALRAFGARVVVTEVDPINALQASMEGYQVALVEDVMADAHIFVTTTGNDDIITSEHFPHMRDDAIVCNIGHFDTEIQVGWLEANAKEHVEIKPQVDRYTMENGRHIILLAKGRLVNLGCASGHPSFVMSNSFTNQVLAQIELWSNRDNGKYPRGDKAGVFFLPKALDEKVAALHLAHVGAKLTKLTPKQAEYINCPVNGPFKPDHYRY</sequence>
<reference key="1">
    <citation type="journal article" date="1992" name="Mol. Biochem. Parasitol.">
        <title>Cloning of the gene encoding Leishmania donovani S-adenosylhomocysteine hydrolase, a potential target for antiparasitic chemotherapy.</title>
        <authorList>
            <person name="Henderson D.M."/>
            <person name="Hanson S."/>
            <person name="Allen T."/>
            <person name="Wilson K."/>
            <person name="Coulter-Karis D.E."/>
            <person name="Greenberg M.L."/>
            <person name="Hershfield M.S."/>
            <person name="Ullman B."/>
        </authorList>
    </citation>
    <scope>NUCLEOTIDE SEQUENCE [GENOMIC DNA]</scope>
    <source>
        <strain>DI700</strain>
    </source>
</reference>
<protein>
    <recommendedName>
        <fullName>Adenosylhomocysteinase</fullName>
        <shortName>AdoHcyase</shortName>
        <ecNumber>3.13.2.1</ecNumber>
    </recommendedName>
    <alternativeName>
        <fullName>S-adenosyl-L-homocysteine hydrolase</fullName>
    </alternativeName>
</protein>
<comment type="function">
    <text>Adenosylhomocysteine is a competitive inhibitor of S-adenosyl-L-methionine-dependent methyl transferase reactions; therefore adenosylhomocysteinase may play a key role in the control of methylations via regulation of the intracellular concentration of adenosylhomocysteine.</text>
</comment>
<comment type="catalytic activity">
    <reaction>
        <text>S-adenosyl-L-homocysteine + H2O = L-homocysteine + adenosine</text>
        <dbReference type="Rhea" id="RHEA:21708"/>
        <dbReference type="ChEBI" id="CHEBI:15377"/>
        <dbReference type="ChEBI" id="CHEBI:16335"/>
        <dbReference type="ChEBI" id="CHEBI:57856"/>
        <dbReference type="ChEBI" id="CHEBI:58199"/>
        <dbReference type="EC" id="3.13.2.1"/>
    </reaction>
</comment>
<comment type="cofactor">
    <cofactor>
        <name>NAD(+)</name>
        <dbReference type="ChEBI" id="CHEBI:57540"/>
    </cofactor>
    <text>Binds 1 NAD(+) per subunit.</text>
</comment>
<comment type="pathway">
    <text>Amino-acid biosynthesis; L-homocysteine biosynthesis; L-homocysteine from S-adenosyl-L-homocysteine: step 1/1.</text>
</comment>
<comment type="subunit">
    <text evidence="1">Homotetramer.</text>
</comment>
<comment type="subcellular location">
    <subcellularLocation>
        <location>Cytoplasm</location>
    </subcellularLocation>
</comment>
<comment type="similarity">
    <text evidence="2">Belongs to the adenosylhomocysteinase family.</text>
</comment>
<evidence type="ECO:0000250" key="1"/>
<evidence type="ECO:0000305" key="2"/>
<proteinExistence type="inferred from homology"/>
<feature type="chain" id="PRO_0000116915" description="Adenosylhomocysteinase">
    <location>
        <begin position="1"/>
        <end position="437"/>
    </location>
</feature>
<feature type="binding site" evidence="1">
    <location>
        <position position="54"/>
    </location>
    <ligand>
        <name>substrate</name>
    </ligand>
</feature>
<feature type="binding site" evidence="1">
    <location>
        <position position="130"/>
    </location>
    <ligand>
        <name>substrate</name>
    </ligand>
</feature>
<feature type="binding site" evidence="1">
    <location>
        <position position="155"/>
    </location>
    <ligand>
        <name>substrate</name>
    </ligand>
</feature>
<feature type="binding site" evidence="1">
    <location>
        <begin position="156"/>
        <end position="158"/>
    </location>
    <ligand>
        <name>NAD(+)</name>
        <dbReference type="ChEBI" id="CHEBI:57540"/>
    </ligand>
</feature>
<feature type="binding site" evidence="1">
    <location>
        <position position="185"/>
    </location>
    <ligand>
        <name>substrate</name>
    </ligand>
</feature>
<feature type="binding site" evidence="1">
    <location>
        <position position="189"/>
    </location>
    <ligand>
        <name>substrate</name>
    </ligand>
</feature>
<feature type="binding site" evidence="1">
    <location>
        <position position="190"/>
    </location>
    <ligand>
        <name>NAD(+)</name>
        <dbReference type="ChEBI" id="CHEBI:57540"/>
    </ligand>
</feature>
<feature type="binding site" evidence="1">
    <location>
        <begin position="219"/>
        <end position="224"/>
    </location>
    <ligand>
        <name>NAD(+)</name>
        <dbReference type="ChEBI" id="CHEBI:57540"/>
    </ligand>
</feature>
<feature type="binding site" evidence="1">
    <location>
        <position position="242"/>
    </location>
    <ligand>
        <name>NAD(+)</name>
        <dbReference type="ChEBI" id="CHEBI:57540"/>
    </ligand>
</feature>
<feature type="binding site" evidence="1">
    <location>
        <position position="277"/>
    </location>
    <ligand>
        <name>NAD(+)</name>
        <dbReference type="ChEBI" id="CHEBI:57540"/>
    </ligand>
</feature>
<feature type="binding site" evidence="1">
    <location>
        <begin position="298"/>
        <end position="300"/>
    </location>
    <ligand>
        <name>NAD(+)</name>
        <dbReference type="ChEBI" id="CHEBI:57540"/>
    </ligand>
</feature>
<feature type="binding site" evidence="1">
    <location>
        <position position="345"/>
    </location>
    <ligand>
        <name>NAD(+)</name>
        <dbReference type="ChEBI" id="CHEBI:57540"/>
    </ligand>
</feature>
<keyword id="KW-0963">Cytoplasm</keyword>
<keyword id="KW-0378">Hydrolase</keyword>
<keyword id="KW-0520">NAD</keyword>
<keyword id="KW-0554">One-carbon metabolism</keyword>